<dbReference type="EC" id="2.6.1.9"/>
<dbReference type="EMBL" id="BA000023">
    <property type="protein sequence ID" value="BAK54587.1"/>
    <property type="molecule type" value="Genomic_DNA"/>
</dbReference>
<dbReference type="RefSeq" id="WP_232616552.1">
    <property type="nucleotide sequence ID" value="NC_003106.2"/>
</dbReference>
<dbReference type="SMR" id="Q970Z4"/>
<dbReference type="STRING" id="273063.STK_14580"/>
<dbReference type="GeneID" id="1459493"/>
<dbReference type="KEGG" id="sto:STK_14580"/>
<dbReference type="PATRIC" id="fig|273063.9.peg.1664"/>
<dbReference type="eggNOG" id="arCOG04273">
    <property type="taxonomic scope" value="Archaea"/>
</dbReference>
<dbReference type="UniPathway" id="UPA00031">
    <property type="reaction ID" value="UER00012"/>
</dbReference>
<dbReference type="Proteomes" id="UP000001015">
    <property type="component" value="Chromosome"/>
</dbReference>
<dbReference type="GO" id="GO:0004400">
    <property type="term" value="F:histidinol-phosphate transaminase activity"/>
    <property type="evidence" value="ECO:0007669"/>
    <property type="project" value="UniProtKB-EC"/>
</dbReference>
<dbReference type="GO" id="GO:0030170">
    <property type="term" value="F:pyridoxal phosphate binding"/>
    <property type="evidence" value="ECO:0007669"/>
    <property type="project" value="InterPro"/>
</dbReference>
<dbReference type="GO" id="GO:0000105">
    <property type="term" value="P:L-histidine biosynthetic process"/>
    <property type="evidence" value="ECO:0007669"/>
    <property type="project" value="UniProtKB-UniPathway"/>
</dbReference>
<dbReference type="CDD" id="cd00609">
    <property type="entry name" value="AAT_like"/>
    <property type="match status" value="1"/>
</dbReference>
<dbReference type="Gene3D" id="3.90.1150.10">
    <property type="entry name" value="Aspartate Aminotransferase, domain 1"/>
    <property type="match status" value="1"/>
</dbReference>
<dbReference type="Gene3D" id="3.40.640.10">
    <property type="entry name" value="Type I PLP-dependent aspartate aminotransferase-like (Major domain)"/>
    <property type="match status" value="1"/>
</dbReference>
<dbReference type="InterPro" id="IPR001917">
    <property type="entry name" value="Aminotrans_II_pyridoxalP_BS"/>
</dbReference>
<dbReference type="InterPro" id="IPR004839">
    <property type="entry name" value="Aminotransferase_I/II_large"/>
</dbReference>
<dbReference type="InterPro" id="IPR005861">
    <property type="entry name" value="HisP_aminotrans"/>
</dbReference>
<dbReference type="InterPro" id="IPR015424">
    <property type="entry name" value="PyrdxlP-dep_Trfase"/>
</dbReference>
<dbReference type="InterPro" id="IPR015421">
    <property type="entry name" value="PyrdxlP-dep_Trfase_major"/>
</dbReference>
<dbReference type="InterPro" id="IPR015422">
    <property type="entry name" value="PyrdxlP-dep_Trfase_small"/>
</dbReference>
<dbReference type="NCBIfam" id="TIGR01141">
    <property type="entry name" value="hisC"/>
    <property type="match status" value="1"/>
</dbReference>
<dbReference type="PANTHER" id="PTHR42885:SF2">
    <property type="entry name" value="HISTIDINOL-PHOSPHATE AMINOTRANSFERASE"/>
    <property type="match status" value="1"/>
</dbReference>
<dbReference type="PANTHER" id="PTHR42885">
    <property type="entry name" value="HISTIDINOL-PHOSPHATE AMINOTRANSFERASE-RELATED"/>
    <property type="match status" value="1"/>
</dbReference>
<dbReference type="Pfam" id="PF00155">
    <property type="entry name" value="Aminotran_1_2"/>
    <property type="match status" value="1"/>
</dbReference>
<dbReference type="SUPFAM" id="SSF53383">
    <property type="entry name" value="PLP-dependent transferases"/>
    <property type="match status" value="1"/>
</dbReference>
<dbReference type="PROSITE" id="PS00599">
    <property type="entry name" value="AA_TRANSFER_CLASS_2"/>
    <property type="match status" value="1"/>
</dbReference>
<accession>Q970Z4</accession>
<accession>F9VNE1</accession>
<gene>
    <name type="primary">hisC</name>
    <name type="ordered locus">STK_14580</name>
</gene>
<evidence type="ECO:0000250" key="1"/>
<evidence type="ECO:0000305" key="2"/>
<keyword id="KW-0028">Amino-acid biosynthesis</keyword>
<keyword id="KW-0032">Aminotransferase</keyword>
<keyword id="KW-0368">Histidine biosynthesis</keyword>
<keyword id="KW-0663">Pyridoxal phosphate</keyword>
<keyword id="KW-1185">Reference proteome</keyword>
<keyword id="KW-0808">Transferase</keyword>
<comment type="catalytic activity">
    <reaction>
        <text>L-histidinol phosphate + 2-oxoglutarate = 3-(imidazol-4-yl)-2-oxopropyl phosphate + L-glutamate</text>
        <dbReference type="Rhea" id="RHEA:23744"/>
        <dbReference type="ChEBI" id="CHEBI:16810"/>
        <dbReference type="ChEBI" id="CHEBI:29985"/>
        <dbReference type="ChEBI" id="CHEBI:57766"/>
        <dbReference type="ChEBI" id="CHEBI:57980"/>
        <dbReference type="EC" id="2.6.1.9"/>
    </reaction>
</comment>
<comment type="cofactor">
    <cofactor evidence="1">
        <name>pyridoxal 5'-phosphate</name>
        <dbReference type="ChEBI" id="CHEBI:597326"/>
    </cofactor>
</comment>
<comment type="pathway">
    <text>Amino-acid biosynthesis; L-histidine biosynthesis; L-histidine from 5-phospho-alpha-D-ribose 1-diphosphate: step 7/9.</text>
</comment>
<comment type="similarity">
    <text evidence="2">Belongs to the class-II pyridoxal-phosphate-dependent aminotransferase family. Histidinol-phosphate aminotransferase subfamily.</text>
</comment>
<protein>
    <recommendedName>
        <fullName>Histidinol-phosphate aminotransferase</fullName>
        <ecNumber>2.6.1.9</ecNumber>
    </recommendedName>
    <alternativeName>
        <fullName>Imidazole acetol-phosphate transaminase</fullName>
    </alternativeName>
</protein>
<organism>
    <name type="scientific">Sulfurisphaera tokodaii (strain DSM 16993 / JCM 10545 / NBRC 100140 / 7)</name>
    <name type="common">Sulfolobus tokodaii</name>
    <dbReference type="NCBI Taxonomy" id="273063"/>
    <lineage>
        <taxon>Archaea</taxon>
        <taxon>Thermoproteota</taxon>
        <taxon>Thermoprotei</taxon>
        <taxon>Sulfolobales</taxon>
        <taxon>Sulfolobaceae</taxon>
        <taxon>Sulfurisphaera</taxon>
    </lineage>
</organism>
<feature type="chain" id="PRO_0000153506" description="Histidinol-phosphate aminotransferase">
    <location>
        <begin position="1"/>
        <end position="357"/>
    </location>
</feature>
<feature type="modified residue" description="N6-(pyridoxal phosphate)lysine" evidence="1">
    <location>
        <position position="221"/>
    </location>
</feature>
<proteinExistence type="inferred from homology"/>
<reference key="1">
    <citation type="journal article" date="2001" name="DNA Res.">
        <title>Complete genome sequence of an aerobic thermoacidophilic Crenarchaeon, Sulfolobus tokodaii strain7.</title>
        <authorList>
            <person name="Kawarabayasi Y."/>
            <person name="Hino Y."/>
            <person name="Horikawa H."/>
            <person name="Jin-no K."/>
            <person name="Takahashi M."/>
            <person name="Sekine M."/>
            <person name="Baba S."/>
            <person name="Ankai A."/>
            <person name="Kosugi H."/>
            <person name="Hosoyama A."/>
            <person name="Fukui S."/>
            <person name="Nagai Y."/>
            <person name="Nishijima K."/>
            <person name="Otsuka R."/>
            <person name="Nakazawa H."/>
            <person name="Takamiya M."/>
            <person name="Kato Y."/>
            <person name="Yoshizawa T."/>
            <person name="Tanaka T."/>
            <person name="Kudoh Y."/>
            <person name="Yamazaki J."/>
            <person name="Kushida N."/>
            <person name="Oguchi A."/>
            <person name="Aoki K."/>
            <person name="Masuda S."/>
            <person name="Yanagii M."/>
            <person name="Nishimura M."/>
            <person name="Yamagishi A."/>
            <person name="Oshima T."/>
            <person name="Kikuchi H."/>
        </authorList>
    </citation>
    <scope>NUCLEOTIDE SEQUENCE [LARGE SCALE GENOMIC DNA]</scope>
    <source>
        <strain>DSM 16993 / JCM 10545 / NBRC 100140 / 7</strain>
    </source>
</reference>
<name>HIS8_SULTO</name>
<sequence length="357" mass="40801">MAPTVDIKNLIYPWLIEAEEYSFNDINDGIRLHLNESPFPPPDFIIEEVKKYLHLGNRYQHPSLLERLRELMAEYNRVEPKNIYPTPGGDGALRAVFYNLIQTGDKVVINNPSYSMYKVYASVRGLKLTRVNLIENDNWWKMNFEKFLDEAKNARLVIIDDPNNPTGSPMLKAEEDKVRALAESINGFILIDEAYYEFSGYTVAKLINKYPNLLIVRTLSKAFSLASYRVGYLIGNEEVIKNLMKGATPFDISLPGYIAGITALENPSYVRKIVEEITKNREYLLNGLRKLGLKVYNSLTNFVFVKDERDLLSPLLNKGVAIRKPIIGYYRISVGTKEQVDTLLKYLGEIIENGNSK</sequence>